<keyword id="KW-0963">Cytoplasm</keyword>
<keyword id="KW-0275">Fatty acid biosynthesis</keyword>
<keyword id="KW-0276">Fatty acid metabolism</keyword>
<keyword id="KW-0444">Lipid biosynthesis</keyword>
<keyword id="KW-0443">Lipid metabolism</keyword>
<keyword id="KW-0596">Phosphopantetheine</keyword>
<keyword id="KW-0597">Phosphoprotein</keyword>
<keyword id="KW-1185">Reference proteome</keyword>
<sequence>MSEIGERVKKIVVEHLGVEPEKVVDNASFIDDLGADSLDTVELVMAFEEEFGCEIPDDAAETILTVGDATKFLEKNAKS</sequence>
<proteinExistence type="inferred from homology"/>
<accession>Q1QKV3</accession>
<name>ACP_NITHX</name>
<feature type="chain" id="PRO_1000066643" description="Acyl carrier protein">
    <location>
        <begin position="1"/>
        <end position="79"/>
    </location>
</feature>
<feature type="domain" description="Carrier" evidence="2">
    <location>
        <begin position="2"/>
        <end position="77"/>
    </location>
</feature>
<feature type="modified residue" description="O-(pantetheine 4'-phosphoryl)serine" evidence="2">
    <location>
        <position position="37"/>
    </location>
</feature>
<gene>
    <name evidence="1" type="primary">acpP</name>
    <name type="ordered locus">Nham_2352</name>
</gene>
<protein>
    <recommendedName>
        <fullName evidence="1">Acyl carrier protein</fullName>
        <shortName evidence="1">ACP</shortName>
    </recommendedName>
</protein>
<comment type="function">
    <text evidence="1">Carrier of the growing fatty acid chain in fatty acid biosynthesis.</text>
</comment>
<comment type="pathway">
    <text evidence="1">Lipid metabolism; fatty acid biosynthesis.</text>
</comment>
<comment type="subcellular location">
    <subcellularLocation>
        <location evidence="1">Cytoplasm</location>
    </subcellularLocation>
</comment>
<comment type="PTM">
    <text evidence="1">4'-phosphopantetheine is transferred from CoA to a specific serine of apo-ACP by AcpS. This modification is essential for activity because fatty acids are bound in thioester linkage to the sulfhydryl of the prosthetic group.</text>
</comment>
<comment type="similarity">
    <text evidence="1">Belongs to the acyl carrier protein (ACP) family.</text>
</comment>
<dbReference type="EMBL" id="CP000319">
    <property type="protein sequence ID" value="ABE63144.1"/>
    <property type="molecule type" value="Genomic_DNA"/>
</dbReference>
<dbReference type="RefSeq" id="WP_006610957.1">
    <property type="nucleotide sequence ID" value="NC_007964.1"/>
</dbReference>
<dbReference type="SMR" id="Q1QKV3"/>
<dbReference type="STRING" id="323097.Nham_2352"/>
<dbReference type="KEGG" id="nha:Nham_2352"/>
<dbReference type="eggNOG" id="COG0236">
    <property type="taxonomic scope" value="Bacteria"/>
</dbReference>
<dbReference type="HOGENOM" id="CLU_108696_5_1_5"/>
<dbReference type="OrthoDB" id="9804551at2"/>
<dbReference type="UniPathway" id="UPA00094"/>
<dbReference type="Proteomes" id="UP000001953">
    <property type="component" value="Chromosome"/>
</dbReference>
<dbReference type="GO" id="GO:0005829">
    <property type="term" value="C:cytosol"/>
    <property type="evidence" value="ECO:0007669"/>
    <property type="project" value="TreeGrafter"/>
</dbReference>
<dbReference type="GO" id="GO:0016020">
    <property type="term" value="C:membrane"/>
    <property type="evidence" value="ECO:0007669"/>
    <property type="project" value="GOC"/>
</dbReference>
<dbReference type="GO" id="GO:0000035">
    <property type="term" value="F:acyl binding"/>
    <property type="evidence" value="ECO:0007669"/>
    <property type="project" value="TreeGrafter"/>
</dbReference>
<dbReference type="GO" id="GO:0000036">
    <property type="term" value="F:acyl carrier activity"/>
    <property type="evidence" value="ECO:0007669"/>
    <property type="project" value="UniProtKB-UniRule"/>
</dbReference>
<dbReference type="GO" id="GO:0009245">
    <property type="term" value="P:lipid A biosynthetic process"/>
    <property type="evidence" value="ECO:0007669"/>
    <property type="project" value="TreeGrafter"/>
</dbReference>
<dbReference type="FunFam" id="1.10.1200.10:FF:000012">
    <property type="entry name" value="Acyl carrier protein"/>
    <property type="match status" value="1"/>
</dbReference>
<dbReference type="Gene3D" id="1.10.1200.10">
    <property type="entry name" value="ACP-like"/>
    <property type="match status" value="1"/>
</dbReference>
<dbReference type="HAMAP" id="MF_01217">
    <property type="entry name" value="Acyl_carrier"/>
    <property type="match status" value="1"/>
</dbReference>
<dbReference type="InterPro" id="IPR003231">
    <property type="entry name" value="ACP"/>
</dbReference>
<dbReference type="InterPro" id="IPR036736">
    <property type="entry name" value="ACP-like_sf"/>
</dbReference>
<dbReference type="InterPro" id="IPR009081">
    <property type="entry name" value="PP-bd_ACP"/>
</dbReference>
<dbReference type="InterPro" id="IPR006162">
    <property type="entry name" value="Ppantetheine_attach_site"/>
</dbReference>
<dbReference type="NCBIfam" id="TIGR00517">
    <property type="entry name" value="acyl_carrier"/>
    <property type="match status" value="1"/>
</dbReference>
<dbReference type="NCBIfam" id="NF002148">
    <property type="entry name" value="PRK00982.1-2"/>
    <property type="match status" value="1"/>
</dbReference>
<dbReference type="NCBIfam" id="NF002149">
    <property type="entry name" value="PRK00982.1-3"/>
    <property type="match status" value="1"/>
</dbReference>
<dbReference type="NCBIfam" id="NF002150">
    <property type="entry name" value="PRK00982.1-4"/>
    <property type="match status" value="1"/>
</dbReference>
<dbReference type="NCBIfam" id="NF002151">
    <property type="entry name" value="PRK00982.1-5"/>
    <property type="match status" value="1"/>
</dbReference>
<dbReference type="PANTHER" id="PTHR20863">
    <property type="entry name" value="ACYL CARRIER PROTEIN"/>
    <property type="match status" value="1"/>
</dbReference>
<dbReference type="PANTHER" id="PTHR20863:SF76">
    <property type="entry name" value="CARRIER DOMAIN-CONTAINING PROTEIN"/>
    <property type="match status" value="1"/>
</dbReference>
<dbReference type="Pfam" id="PF00550">
    <property type="entry name" value="PP-binding"/>
    <property type="match status" value="1"/>
</dbReference>
<dbReference type="SUPFAM" id="SSF47336">
    <property type="entry name" value="ACP-like"/>
    <property type="match status" value="1"/>
</dbReference>
<dbReference type="PROSITE" id="PS50075">
    <property type="entry name" value="CARRIER"/>
    <property type="match status" value="1"/>
</dbReference>
<dbReference type="PROSITE" id="PS00012">
    <property type="entry name" value="PHOSPHOPANTETHEINE"/>
    <property type="match status" value="1"/>
</dbReference>
<organism>
    <name type="scientific">Nitrobacter hamburgensis (strain DSM 10229 / NCIMB 13809 / X14)</name>
    <dbReference type="NCBI Taxonomy" id="323097"/>
    <lineage>
        <taxon>Bacteria</taxon>
        <taxon>Pseudomonadati</taxon>
        <taxon>Pseudomonadota</taxon>
        <taxon>Alphaproteobacteria</taxon>
        <taxon>Hyphomicrobiales</taxon>
        <taxon>Nitrobacteraceae</taxon>
        <taxon>Nitrobacter</taxon>
    </lineage>
</organism>
<reference key="1">
    <citation type="submission" date="2006-03" db="EMBL/GenBank/DDBJ databases">
        <title>Complete sequence of chromosome of Nitrobacter hamburgensis X14.</title>
        <authorList>
            <consortium name="US DOE Joint Genome Institute"/>
            <person name="Copeland A."/>
            <person name="Lucas S."/>
            <person name="Lapidus A."/>
            <person name="Barry K."/>
            <person name="Detter J.C."/>
            <person name="Glavina del Rio T."/>
            <person name="Hammon N."/>
            <person name="Israni S."/>
            <person name="Dalin E."/>
            <person name="Tice H."/>
            <person name="Pitluck S."/>
            <person name="Chain P."/>
            <person name="Malfatti S."/>
            <person name="Shin M."/>
            <person name="Vergez L."/>
            <person name="Schmutz J."/>
            <person name="Larimer F."/>
            <person name="Land M."/>
            <person name="Hauser L."/>
            <person name="Kyrpides N."/>
            <person name="Ivanova N."/>
            <person name="Ward B."/>
            <person name="Arp D."/>
            <person name="Klotz M."/>
            <person name="Stein L."/>
            <person name="O'Mullan G."/>
            <person name="Starkenburg S."/>
            <person name="Sayavedra L."/>
            <person name="Poret-Peterson A.T."/>
            <person name="Gentry M.E."/>
            <person name="Bruce D."/>
            <person name="Richardson P."/>
        </authorList>
    </citation>
    <scope>NUCLEOTIDE SEQUENCE [LARGE SCALE GENOMIC DNA]</scope>
    <source>
        <strain>DSM 10229 / NCIMB 13809 / X14</strain>
    </source>
</reference>
<evidence type="ECO:0000255" key="1">
    <source>
        <dbReference type="HAMAP-Rule" id="MF_01217"/>
    </source>
</evidence>
<evidence type="ECO:0000255" key="2">
    <source>
        <dbReference type="PROSITE-ProRule" id="PRU00258"/>
    </source>
</evidence>